<proteinExistence type="inferred from homology"/>
<dbReference type="EC" id="2.1.3.3" evidence="2"/>
<dbReference type="EMBL" id="AE016825">
    <property type="protein sequence ID" value="AAQ61443.1"/>
    <property type="molecule type" value="Genomic_DNA"/>
</dbReference>
<dbReference type="RefSeq" id="WP_011137328.1">
    <property type="nucleotide sequence ID" value="NC_005085.1"/>
</dbReference>
<dbReference type="SMR" id="Q7NRK0"/>
<dbReference type="STRING" id="243365.CV_3781"/>
<dbReference type="KEGG" id="cvi:CV_3781"/>
<dbReference type="eggNOG" id="COG0078">
    <property type="taxonomic scope" value="Bacteria"/>
</dbReference>
<dbReference type="HOGENOM" id="CLU_043846_3_1_4"/>
<dbReference type="OrthoDB" id="9802587at2"/>
<dbReference type="UniPathway" id="UPA00254">
    <property type="reaction ID" value="UER00365"/>
</dbReference>
<dbReference type="Proteomes" id="UP000001424">
    <property type="component" value="Chromosome"/>
</dbReference>
<dbReference type="GO" id="GO:0005737">
    <property type="term" value="C:cytoplasm"/>
    <property type="evidence" value="ECO:0007669"/>
    <property type="project" value="UniProtKB-SubCell"/>
</dbReference>
<dbReference type="GO" id="GO:0016597">
    <property type="term" value="F:amino acid binding"/>
    <property type="evidence" value="ECO:0007669"/>
    <property type="project" value="InterPro"/>
</dbReference>
<dbReference type="GO" id="GO:0004585">
    <property type="term" value="F:ornithine carbamoyltransferase activity"/>
    <property type="evidence" value="ECO:0007669"/>
    <property type="project" value="UniProtKB-UniRule"/>
</dbReference>
<dbReference type="GO" id="GO:0042450">
    <property type="term" value="P:arginine biosynthetic process via ornithine"/>
    <property type="evidence" value="ECO:0007669"/>
    <property type="project" value="TreeGrafter"/>
</dbReference>
<dbReference type="GO" id="GO:0019547">
    <property type="term" value="P:arginine catabolic process to ornithine"/>
    <property type="evidence" value="ECO:0007669"/>
    <property type="project" value="UniProtKB-UniPathway"/>
</dbReference>
<dbReference type="GO" id="GO:0019240">
    <property type="term" value="P:citrulline biosynthetic process"/>
    <property type="evidence" value="ECO:0007669"/>
    <property type="project" value="TreeGrafter"/>
</dbReference>
<dbReference type="GO" id="GO:0006526">
    <property type="term" value="P:L-arginine biosynthetic process"/>
    <property type="evidence" value="ECO:0007669"/>
    <property type="project" value="UniProtKB-UniRule"/>
</dbReference>
<dbReference type="FunFam" id="3.40.50.1370:FF:000004">
    <property type="entry name" value="Ornithine carbamoyltransferase"/>
    <property type="match status" value="1"/>
</dbReference>
<dbReference type="Gene3D" id="3.40.50.1370">
    <property type="entry name" value="Aspartate/ornithine carbamoyltransferase"/>
    <property type="match status" value="2"/>
</dbReference>
<dbReference type="HAMAP" id="MF_01109">
    <property type="entry name" value="OTCase"/>
    <property type="match status" value="1"/>
</dbReference>
<dbReference type="InterPro" id="IPR006132">
    <property type="entry name" value="Asp/Orn_carbamoyltranf_P-bd"/>
</dbReference>
<dbReference type="InterPro" id="IPR006130">
    <property type="entry name" value="Asp/Orn_carbamoylTrfase"/>
</dbReference>
<dbReference type="InterPro" id="IPR036901">
    <property type="entry name" value="Asp/Orn_carbamoylTrfase_sf"/>
</dbReference>
<dbReference type="InterPro" id="IPR006131">
    <property type="entry name" value="Asp_carbamoyltransf_Asp/Orn-bd"/>
</dbReference>
<dbReference type="InterPro" id="IPR002292">
    <property type="entry name" value="Orn/put_carbamltrans"/>
</dbReference>
<dbReference type="InterPro" id="IPR024904">
    <property type="entry name" value="OTCase_ArgI"/>
</dbReference>
<dbReference type="NCBIfam" id="TIGR00658">
    <property type="entry name" value="orni_carb_tr"/>
    <property type="match status" value="1"/>
</dbReference>
<dbReference type="NCBIfam" id="NF002470">
    <property type="entry name" value="PRK01713.1"/>
    <property type="match status" value="1"/>
</dbReference>
<dbReference type="NCBIfam" id="NF003286">
    <property type="entry name" value="PRK04284.1"/>
    <property type="match status" value="1"/>
</dbReference>
<dbReference type="PANTHER" id="PTHR45753:SF2">
    <property type="entry name" value="ORNITHINE CARBAMOYLTRANSFERASE"/>
    <property type="match status" value="1"/>
</dbReference>
<dbReference type="PANTHER" id="PTHR45753">
    <property type="entry name" value="ORNITHINE CARBAMOYLTRANSFERASE, MITOCHONDRIAL"/>
    <property type="match status" value="1"/>
</dbReference>
<dbReference type="Pfam" id="PF00185">
    <property type="entry name" value="OTCace"/>
    <property type="match status" value="1"/>
</dbReference>
<dbReference type="Pfam" id="PF02729">
    <property type="entry name" value="OTCace_N"/>
    <property type="match status" value="1"/>
</dbReference>
<dbReference type="PRINTS" id="PR00100">
    <property type="entry name" value="AOTCASE"/>
</dbReference>
<dbReference type="PRINTS" id="PR00102">
    <property type="entry name" value="OTCASE"/>
</dbReference>
<dbReference type="SUPFAM" id="SSF53671">
    <property type="entry name" value="Aspartate/ornithine carbamoyltransferase"/>
    <property type="match status" value="1"/>
</dbReference>
<dbReference type="PROSITE" id="PS00097">
    <property type="entry name" value="CARBAMOYLTRANSFERASE"/>
    <property type="match status" value="1"/>
</dbReference>
<name>OTCC_CHRVO</name>
<reference key="1">
    <citation type="journal article" date="2003" name="Proc. Natl. Acad. Sci. U.S.A.">
        <title>The complete genome sequence of Chromobacterium violaceum reveals remarkable and exploitable bacterial adaptability.</title>
        <authorList>
            <person name="Vasconcelos A.T.R."/>
            <person name="de Almeida D.F."/>
            <person name="Hungria M."/>
            <person name="Guimaraes C.T."/>
            <person name="Antonio R.V."/>
            <person name="Almeida F.C."/>
            <person name="de Almeida L.G.P."/>
            <person name="de Almeida R."/>
            <person name="Alves-Gomes J.A."/>
            <person name="Andrade E.M."/>
            <person name="Araripe J."/>
            <person name="de Araujo M.F.F."/>
            <person name="Astolfi-Filho S."/>
            <person name="Azevedo V."/>
            <person name="Baptista A.J."/>
            <person name="Bataus L.A.M."/>
            <person name="Batista J.S."/>
            <person name="Belo A."/>
            <person name="van den Berg C."/>
            <person name="Bogo M."/>
            <person name="Bonatto S."/>
            <person name="Bordignon J."/>
            <person name="Brigido M.M."/>
            <person name="Brito C.A."/>
            <person name="Brocchi M."/>
            <person name="Burity H.A."/>
            <person name="Camargo A.A."/>
            <person name="Cardoso D.D.P."/>
            <person name="Carneiro N.P."/>
            <person name="Carraro D.M."/>
            <person name="Carvalho C.M.B."/>
            <person name="Cascardo J.C.M."/>
            <person name="Cavada B.S."/>
            <person name="Chueire L.M.O."/>
            <person name="Creczynski-Pasa T.B."/>
            <person name="Cunha-Junior N.C."/>
            <person name="Fagundes N."/>
            <person name="Falcao C.L."/>
            <person name="Fantinatti F."/>
            <person name="Farias I.P."/>
            <person name="Felipe M.S.S."/>
            <person name="Ferrari L.P."/>
            <person name="Ferro J.A."/>
            <person name="Ferro M.I.T."/>
            <person name="Franco G.R."/>
            <person name="Freitas N.S.A."/>
            <person name="Furlan L.R."/>
            <person name="Gazzinelli R.T."/>
            <person name="Gomes E.A."/>
            <person name="Goncalves P.R."/>
            <person name="Grangeiro T.B."/>
            <person name="Grattapaglia D."/>
            <person name="Grisard E.C."/>
            <person name="Hanna E.S."/>
            <person name="Jardim S.N."/>
            <person name="Laurino J."/>
            <person name="Leoi L.C.T."/>
            <person name="Lima L.F.A."/>
            <person name="Loureiro M.F."/>
            <person name="Lyra M.C.C.P."/>
            <person name="Madeira H.M.F."/>
            <person name="Manfio G.P."/>
            <person name="Maranhao A.Q."/>
            <person name="Martins W.S."/>
            <person name="di Mauro S.M.Z."/>
            <person name="de Medeiros S.R.B."/>
            <person name="Meissner R.V."/>
            <person name="Moreira M.A.M."/>
            <person name="Nascimento F.F."/>
            <person name="Nicolas M.F."/>
            <person name="Oliveira J.G."/>
            <person name="Oliveira S.C."/>
            <person name="Paixao R.F.C."/>
            <person name="Parente J.A."/>
            <person name="Pedrosa F.O."/>
            <person name="Pena S.D.J."/>
            <person name="Pereira J.O."/>
            <person name="Pereira M."/>
            <person name="Pinto L.S.R.C."/>
            <person name="Pinto L.S."/>
            <person name="Porto J.I.R."/>
            <person name="Potrich D.P."/>
            <person name="Ramalho-Neto C.E."/>
            <person name="Reis A.M.M."/>
            <person name="Rigo L.U."/>
            <person name="Rondinelli E."/>
            <person name="Santos E.B.P."/>
            <person name="Santos F.R."/>
            <person name="Schneider M.P.C."/>
            <person name="Seuanez H.N."/>
            <person name="Silva A.M.R."/>
            <person name="da Silva A.L.C."/>
            <person name="Silva D.W."/>
            <person name="Silva R."/>
            <person name="Simoes I.C."/>
            <person name="Simon D."/>
            <person name="Soares C.M.A."/>
            <person name="Soares R.B.A."/>
            <person name="Souza E.M."/>
            <person name="Souza K.R.L."/>
            <person name="Souza R.C."/>
            <person name="Steffens M.B.R."/>
            <person name="Steindel M."/>
            <person name="Teixeira S.R."/>
            <person name="Urmenyi T."/>
            <person name="Vettore A."/>
            <person name="Wassem R."/>
            <person name="Zaha A."/>
            <person name="Simpson A.J.G."/>
        </authorList>
    </citation>
    <scope>NUCLEOTIDE SEQUENCE [LARGE SCALE GENOMIC DNA]</scope>
    <source>
        <strain>ATCC 12472 / DSM 30191 / JCM 1249 / CCUG 213 / NBRC 12614 / NCIMB 9131 / NCTC 9757 / MK</strain>
    </source>
</reference>
<comment type="function">
    <text evidence="1">Reversibly catalyzes the transfer of the carbamoyl group from carbamoyl phosphate (CP) to the N(epsilon) atom of ornithine (ORN) to produce L-citrulline.</text>
</comment>
<comment type="catalytic activity">
    <reaction evidence="2">
        <text>carbamoyl phosphate + L-ornithine = L-citrulline + phosphate + H(+)</text>
        <dbReference type="Rhea" id="RHEA:19513"/>
        <dbReference type="ChEBI" id="CHEBI:15378"/>
        <dbReference type="ChEBI" id="CHEBI:43474"/>
        <dbReference type="ChEBI" id="CHEBI:46911"/>
        <dbReference type="ChEBI" id="CHEBI:57743"/>
        <dbReference type="ChEBI" id="CHEBI:58228"/>
        <dbReference type="EC" id="2.1.3.3"/>
    </reaction>
</comment>
<comment type="pathway">
    <text evidence="2">Amino-acid degradation; L-arginine degradation via ADI pathway; carbamoyl phosphate from L-arginine: step 2/2.</text>
</comment>
<comment type="subcellular location">
    <subcellularLocation>
        <location evidence="2">Cytoplasm</location>
    </subcellularLocation>
</comment>
<comment type="similarity">
    <text evidence="2">Belongs to the aspartate/ornithine carbamoyltransferase superfamily. OTCase family.</text>
</comment>
<keyword id="KW-0056">Arginine metabolism</keyword>
<keyword id="KW-0963">Cytoplasm</keyword>
<keyword id="KW-1185">Reference proteome</keyword>
<keyword id="KW-0808">Transferase</keyword>
<evidence type="ECO:0000250" key="1"/>
<evidence type="ECO:0000255" key="2">
    <source>
        <dbReference type="HAMAP-Rule" id="MF_01109"/>
    </source>
</evidence>
<organism>
    <name type="scientific">Chromobacterium violaceum (strain ATCC 12472 / DSM 30191 / JCM 1249 / CCUG 213 / NBRC 12614 / NCIMB 9131 / NCTC 9757 / MK)</name>
    <dbReference type="NCBI Taxonomy" id="243365"/>
    <lineage>
        <taxon>Bacteria</taxon>
        <taxon>Pseudomonadati</taxon>
        <taxon>Pseudomonadota</taxon>
        <taxon>Betaproteobacteria</taxon>
        <taxon>Neisseriales</taxon>
        <taxon>Chromobacteriaceae</taxon>
        <taxon>Chromobacterium</taxon>
    </lineage>
</organism>
<gene>
    <name evidence="2" type="primary">arcB</name>
    <name type="ordered locus">CV_3781</name>
</gene>
<protein>
    <recommendedName>
        <fullName evidence="2">Ornithine carbamoyltransferase, catabolic</fullName>
        <shortName evidence="2">OTCase</shortName>
        <ecNumber evidence="2">2.1.3.3</ecNumber>
    </recommendedName>
</protein>
<feature type="chain" id="PRO_0000112909" description="Ornithine carbamoyltransferase, catabolic">
    <location>
        <begin position="1"/>
        <end position="336"/>
    </location>
</feature>
<feature type="binding site" evidence="2">
    <location>
        <begin position="57"/>
        <end position="60"/>
    </location>
    <ligand>
        <name>carbamoyl phosphate</name>
        <dbReference type="ChEBI" id="CHEBI:58228"/>
    </ligand>
</feature>
<feature type="binding site" evidence="2">
    <location>
        <position position="84"/>
    </location>
    <ligand>
        <name>carbamoyl phosphate</name>
        <dbReference type="ChEBI" id="CHEBI:58228"/>
    </ligand>
</feature>
<feature type="binding site" evidence="2">
    <location>
        <position position="108"/>
    </location>
    <ligand>
        <name>carbamoyl phosphate</name>
        <dbReference type="ChEBI" id="CHEBI:58228"/>
    </ligand>
</feature>
<feature type="binding site" evidence="2">
    <location>
        <begin position="136"/>
        <end position="139"/>
    </location>
    <ligand>
        <name>carbamoyl phosphate</name>
        <dbReference type="ChEBI" id="CHEBI:58228"/>
    </ligand>
</feature>
<feature type="binding site" evidence="2">
    <location>
        <position position="169"/>
    </location>
    <ligand>
        <name>L-ornithine</name>
        <dbReference type="ChEBI" id="CHEBI:46911"/>
    </ligand>
</feature>
<feature type="binding site" evidence="2">
    <location>
        <position position="233"/>
    </location>
    <ligand>
        <name>L-ornithine</name>
        <dbReference type="ChEBI" id="CHEBI:46911"/>
    </ligand>
</feature>
<feature type="binding site" evidence="2">
    <location>
        <begin position="237"/>
        <end position="238"/>
    </location>
    <ligand>
        <name>L-ornithine</name>
        <dbReference type="ChEBI" id="CHEBI:46911"/>
    </ligand>
</feature>
<feature type="binding site" evidence="2">
    <location>
        <begin position="275"/>
        <end position="276"/>
    </location>
    <ligand>
        <name>carbamoyl phosphate</name>
        <dbReference type="ChEBI" id="CHEBI:58228"/>
    </ligand>
</feature>
<feature type="binding site" evidence="2">
    <location>
        <position position="322"/>
    </location>
    <ligand>
        <name>carbamoyl phosphate</name>
        <dbReference type="ChEBI" id="CHEBI:58228"/>
    </ligand>
</feature>
<sequence>MAFNLRNRNFLKMLDFTPREIRYLLDLSRDLKRAKYSGTEQQHLKGKNVALIFEKTSTRTRCAFEVACFDQGANVSYIGPSGSQIGHKESMKDTARVLGRMYDAIEYRGYSQDMVEHELAAYAGVPVYNGLTDEYHPTQMLADVLTMWEHSDKPISQISYTYLGDARNNMGNSLLVIGSKLGMDVRIGAPKHLWPTDELVAECREIAKRTGARITLTEDPKEAVKGTDFIHTDVWVSMGEPAEVWAERIRLLKPYQVNSALMAASGNPQVKFMHCLPAFHNSETKVGKEISAQYPELANGIEVTEDVFESEACIAFEQAENRMHTIKAILVSTLGD</sequence>
<accession>Q7NRK0</accession>